<comment type="function">
    <text evidence="1">Catalyzes the transfer of the diacylglyceryl group from phosphatidylglycerol to the sulfhydryl group of the N-terminal cysteine of a prolipoprotein, the first step in the formation of mature lipoproteins.</text>
</comment>
<comment type="catalytic activity">
    <reaction evidence="1">
        <text>L-cysteinyl-[prolipoprotein] + a 1,2-diacyl-sn-glycero-3-phospho-(1'-sn-glycerol) = an S-1,2-diacyl-sn-glyceryl-L-cysteinyl-[prolipoprotein] + sn-glycerol 1-phosphate + H(+)</text>
        <dbReference type="Rhea" id="RHEA:56712"/>
        <dbReference type="Rhea" id="RHEA-COMP:14679"/>
        <dbReference type="Rhea" id="RHEA-COMP:14680"/>
        <dbReference type="ChEBI" id="CHEBI:15378"/>
        <dbReference type="ChEBI" id="CHEBI:29950"/>
        <dbReference type="ChEBI" id="CHEBI:57685"/>
        <dbReference type="ChEBI" id="CHEBI:64716"/>
        <dbReference type="ChEBI" id="CHEBI:140658"/>
        <dbReference type="EC" id="2.5.1.145"/>
    </reaction>
</comment>
<comment type="pathway">
    <text evidence="1">Protein modification; lipoprotein biosynthesis (diacylglyceryl transfer).</text>
</comment>
<comment type="subcellular location">
    <subcellularLocation>
        <location evidence="1">Cell inner membrane</location>
        <topology evidence="1">Multi-pass membrane protein</topology>
    </subcellularLocation>
</comment>
<comment type="similarity">
    <text evidence="1">Belongs to the Lgt family.</text>
</comment>
<name>LGT_PROMT</name>
<dbReference type="EC" id="2.5.1.145" evidence="1"/>
<dbReference type="EMBL" id="CP000095">
    <property type="protein sequence ID" value="AAZ59280.1"/>
    <property type="molecule type" value="Genomic_DNA"/>
</dbReference>
<dbReference type="RefSeq" id="WP_011294425.1">
    <property type="nucleotide sequence ID" value="NC_007335.2"/>
</dbReference>
<dbReference type="SMR" id="Q46LZ1"/>
<dbReference type="STRING" id="59920.PMN2A_1792"/>
<dbReference type="KEGG" id="pmn:PMN2A_1792"/>
<dbReference type="HOGENOM" id="CLU_013386_1_2_3"/>
<dbReference type="OrthoDB" id="871140at2"/>
<dbReference type="PhylomeDB" id="Q46LZ1"/>
<dbReference type="UniPathway" id="UPA00664"/>
<dbReference type="Proteomes" id="UP000002535">
    <property type="component" value="Chromosome"/>
</dbReference>
<dbReference type="GO" id="GO:0005886">
    <property type="term" value="C:plasma membrane"/>
    <property type="evidence" value="ECO:0007669"/>
    <property type="project" value="UniProtKB-SubCell"/>
</dbReference>
<dbReference type="GO" id="GO:0008961">
    <property type="term" value="F:phosphatidylglycerol-prolipoprotein diacylglyceryl transferase activity"/>
    <property type="evidence" value="ECO:0007669"/>
    <property type="project" value="UniProtKB-UniRule"/>
</dbReference>
<dbReference type="GO" id="GO:0042158">
    <property type="term" value="P:lipoprotein biosynthetic process"/>
    <property type="evidence" value="ECO:0007669"/>
    <property type="project" value="UniProtKB-UniRule"/>
</dbReference>
<dbReference type="HAMAP" id="MF_01147">
    <property type="entry name" value="Lgt"/>
    <property type="match status" value="1"/>
</dbReference>
<dbReference type="InterPro" id="IPR001640">
    <property type="entry name" value="Lgt"/>
</dbReference>
<dbReference type="NCBIfam" id="TIGR00544">
    <property type="entry name" value="lgt"/>
    <property type="match status" value="1"/>
</dbReference>
<dbReference type="PANTHER" id="PTHR30589:SF0">
    <property type="entry name" value="PHOSPHATIDYLGLYCEROL--PROLIPOPROTEIN DIACYLGLYCERYL TRANSFERASE"/>
    <property type="match status" value="1"/>
</dbReference>
<dbReference type="PANTHER" id="PTHR30589">
    <property type="entry name" value="PROLIPOPROTEIN DIACYLGLYCERYL TRANSFERASE"/>
    <property type="match status" value="1"/>
</dbReference>
<dbReference type="Pfam" id="PF01790">
    <property type="entry name" value="LGT"/>
    <property type="match status" value="1"/>
</dbReference>
<dbReference type="PROSITE" id="PS01311">
    <property type="entry name" value="LGT"/>
    <property type="match status" value="1"/>
</dbReference>
<feature type="chain" id="PRO_1000053472" description="Phosphatidylglycerol--prolipoprotein diacylglyceryl transferase">
    <location>
        <begin position="1"/>
        <end position="303"/>
    </location>
</feature>
<feature type="transmembrane region" description="Helical" evidence="1">
    <location>
        <begin position="18"/>
        <end position="38"/>
    </location>
</feature>
<feature type="transmembrane region" description="Helical" evidence="1">
    <location>
        <begin position="58"/>
        <end position="78"/>
    </location>
</feature>
<feature type="transmembrane region" description="Helical" evidence="1">
    <location>
        <begin position="106"/>
        <end position="126"/>
    </location>
</feature>
<feature type="transmembrane region" description="Helical" evidence="1">
    <location>
        <begin position="133"/>
        <end position="153"/>
    </location>
</feature>
<feature type="transmembrane region" description="Helical" evidence="1">
    <location>
        <begin position="193"/>
        <end position="213"/>
    </location>
</feature>
<feature type="transmembrane region" description="Helical" evidence="1">
    <location>
        <begin position="223"/>
        <end position="243"/>
    </location>
</feature>
<feature type="transmembrane region" description="Helical" evidence="1">
    <location>
        <begin position="266"/>
        <end position="286"/>
    </location>
</feature>
<feature type="binding site" evidence="1">
    <location>
        <position position="154"/>
    </location>
    <ligand>
        <name>a 1,2-diacyl-sn-glycero-3-phospho-(1'-sn-glycerol)</name>
        <dbReference type="ChEBI" id="CHEBI:64716"/>
    </ligand>
</feature>
<protein>
    <recommendedName>
        <fullName evidence="1">Phosphatidylglycerol--prolipoprotein diacylglyceryl transferase</fullName>
        <ecNumber evidence="1">2.5.1.145</ecNumber>
    </recommendedName>
</protein>
<gene>
    <name evidence="1" type="primary">lgt</name>
    <name type="ordered locus">PMN2A_1792</name>
</gene>
<proteinExistence type="inferred from homology"/>
<evidence type="ECO:0000255" key="1">
    <source>
        <dbReference type="HAMAP-Rule" id="MF_01147"/>
    </source>
</evidence>
<organism>
    <name type="scientific">Prochlorococcus marinus (strain NATL2A)</name>
    <dbReference type="NCBI Taxonomy" id="59920"/>
    <lineage>
        <taxon>Bacteria</taxon>
        <taxon>Bacillati</taxon>
        <taxon>Cyanobacteriota</taxon>
        <taxon>Cyanophyceae</taxon>
        <taxon>Synechococcales</taxon>
        <taxon>Prochlorococcaceae</taxon>
        <taxon>Prochlorococcus</taxon>
    </lineage>
</organism>
<sequence length="303" mass="34279">MEHIFLALRSPGPELFQLGPFSLRWYGLLIAISVLVGLNLSSELASKKGLKKSLINDLLPILVLASVIGARIYYVAFEWRNYTGKNFWSSINFLNLNIPIPSALEIWGGGIAIHGALIMGTLSIIFFCRWRQEHFWDVIDVLVPSVALGQAIGRWGNFFNNEAFGIPTNLPWKLFIPYRFRPEIFSTIDYFHPTFLYESVWNIFVFGILIFLFRKANKKDLKLPPGSLSCLYLITYSLGRFWIEGLRTDPLCLGGVPPFCEGGLRIAQLISLFLISAGLLGIWRIYVSKKALPDPSSMNGRNQ</sequence>
<reference key="1">
    <citation type="journal article" date="2007" name="PLoS Genet.">
        <title>Patterns and implications of gene gain and loss in the evolution of Prochlorococcus.</title>
        <authorList>
            <person name="Kettler G.C."/>
            <person name="Martiny A.C."/>
            <person name="Huang K."/>
            <person name="Zucker J."/>
            <person name="Coleman M.L."/>
            <person name="Rodrigue S."/>
            <person name="Chen F."/>
            <person name="Lapidus A."/>
            <person name="Ferriera S."/>
            <person name="Johnson J."/>
            <person name="Steglich C."/>
            <person name="Church G.M."/>
            <person name="Richardson P."/>
            <person name="Chisholm S.W."/>
        </authorList>
    </citation>
    <scope>NUCLEOTIDE SEQUENCE [LARGE SCALE GENOMIC DNA]</scope>
    <source>
        <strain>NATL2A</strain>
    </source>
</reference>
<accession>Q46LZ1</accession>
<keyword id="KW-0997">Cell inner membrane</keyword>
<keyword id="KW-1003">Cell membrane</keyword>
<keyword id="KW-0472">Membrane</keyword>
<keyword id="KW-1185">Reference proteome</keyword>
<keyword id="KW-0808">Transferase</keyword>
<keyword id="KW-0812">Transmembrane</keyword>
<keyword id="KW-1133">Transmembrane helix</keyword>